<organism evidence="8">
    <name type="scientific">Trypanosoma brucei brucei</name>
    <dbReference type="NCBI Taxonomy" id="5702"/>
    <lineage>
        <taxon>Eukaryota</taxon>
        <taxon>Discoba</taxon>
        <taxon>Euglenozoa</taxon>
        <taxon>Kinetoplastea</taxon>
        <taxon>Metakinetoplastina</taxon>
        <taxon>Trypanosomatida</taxon>
        <taxon>Trypanosomatidae</taxon>
        <taxon>Trypanosoma</taxon>
    </lineage>
</organism>
<comment type="function">
    <text evidence="2 3 4">Key enzyme in myo-inositol biosynthesis pathway that catalyzes the conversion of glucose 6-phosphate to 1-myo-inositol 1-phosphate in a NAD-dependent manner (PubMed:16246027, PubMed:16824097). Rate-limiting enzyme in the synthesis of all inositol-containing compounds (By similarity). De novo-synthesized myo-inositol is essential for incorporation into GPI (glycosylphosphatidylinositol) glycolipids in the bloodstream form (PubMed:16246027).</text>
</comment>
<comment type="catalytic activity">
    <reaction evidence="4">
        <text>D-glucose 6-phosphate = 1D-myo-inositol 3-phosphate</text>
        <dbReference type="Rhea" id="RHEA:10716"/>
        <dbReference type="ChEBI" id="CHEBI:58401"/>
        <dbReference type="ChEBI" id="CHEBI:61548"/>
        <dbReference type="EC" id="5.5.1.4"/>
    </reaction>
</comment>
<comment type="cofactor">
    <cofactor evidence="4">
        <name>NAD(+)</name>
        <dbReference type="ChEBI" id="CHEBI:57540"/>
    </cofactor>
</comment>
<comment type="activity regulation">
    <text evidence="4">Activated by ammonium ions.</text>
</comment>
<comment type="biophysicochemical properties">
    <kinetics>
        <KM evidence="4">0.58 mM for D-glucose 6-phosphate (at 37 degrees Celsius and pH 8.0)</KM>
    </kinetics>
</comment>
<comment type="pathway">
    <text evidence="7">Polyol metabolism; myo-inositol biosynthesis; myo-inositol from D-glucose 6-phosphate: step 1/2.</text>
</comment>
<comment type="subcellular location">
    <subcellularLocation>
        <location evidence="4">Cytoplasm</location>
        <location evidence="4">Cytosol</location>
    </subcellularLocation>
</comment>
<comment type="developmental stage">
    <text evidence="4">Expressed in both the bloodstream form and the insect-form procyclic cells.</text>
</comment>
<comment type="disruption phenotype">
    <text evidence="3 4">Inviable in the bloodstream form; viability is not restored by addition of extracellular myo-inositol (PubMed:16246027, PubMed:16824097). Levels of glycosylphosphatidylinositol (GPI) glycolipids are decreased (PubMed:16246027, PubMed:16824097).</text>
</comment>
<comment type="similarity">
    <text evidence="7">Belongs to the myo-inositol 1-phosphate synthase family.</text>
</comment>
<sequence>MPAVRTKSGHGVEYTDEAITATYSYNTTRVEKEANGDVTVQPIQLHLKFRTQRKVQRTGVMLIGWGGNNGTTVTAALMAHKHRXSWRTKTGTKQPDYLGSITQSSTMSVGLTSEMEEVFVPMKALVPMINPAELVIGGWDCSGMNIADAMRRAQVLDVTLQDALYNYLKDMHPLPAAFDLDFVAENQLSRADNIMQTKNKWESVEQLRADIRNFREKNSLEEVIVLWTANTERFSEHITGVHDTADHLIDAIRRNENEIAPSVLYATAAIMEGCSYVNGAPQNTLCAGLIELARRHGVFVVGDDFKSGQTKVKSGLVEFFMDAGIKPECIASYNHLGNNDGYNLAAPKQFRSKEVTKGGVLDDMVSSNSILYPPGSRGPDHCIVIKYLPYVGDSKRALDEYNFSIFMGGEQTVVLHNTCQDSLLAAPLIIDLVVLTELMHRVTVTQCDGEDCCDKKEKMTSYTHMETVLSLLSYLLKAPRVPEGTPVVNGLNRQGQAIKNVLRALVGLPPDNNMQLECRLPFLRGVGS</sequence>
<proteinExistence type="evidence at protein level"/>
<protein>
    <recommendedName>
        <fullName evidence="7">Inositol-3-phosphate synthase</fullName>
        <ecNumber evidence="4">5.5.1.4</ecNumber>
    </recommendedName>
    <alternativeName>
        <fullName evidence="5">Myo-inositol-1-phosphate synthase</fullName>
        <shortName evidence="7">MIP synthase</shortName>
    </alternativeName>
    <alternativeName>
        <fullName evidence="6">TbINO1</fullName>
    </alternativeName>
</protein>
<evidence type="ECO:0000250" key="1">
    <source>
        <dbReference type="UniProtKB" id="P11986"/>
    </source>
</evidence>
<evidence type="ECO:0000250" key="2">
    <source>
        <dbReference type="UniProtKB" id="Q9NPH2"/>
    </source>
</evidence>
<evidence type="ECO:0000269" key="3">
    <source>
    </source>
</evidence>
<evidence type="ECO:0000269" key="4">
    <source>
    </source>
</evidence>
<evidence type="ECO:0000303" key="5">
    <source>
    </source>
</evidence>
<evidence type="ECO:0000303" key="6">
    <source>
    </source>
</evidence>
<evidence type="ECO:0000305" key="7"/>
<evidence type="ECO:0000312" key="8">
    <source>
        <dbReference type="EMBL" id="CAI29175.1"/>
    </source>
</evidence>
<name>INO1_TRYBB</name>
<reference evidence="8" key="1">
    <citation type="journal article" date="2006" name="Mol. Microbiol.">
        <title>The glycosylphosphatidylinositol (GPI) biosynthetic pathway of bloodstream-form Trypanosoma brucei is dependent on the de novo synthesis of inositol.</title>
        <authorList>
            <person name="Martin K.L."/>
            <person name="Smith T.K."/>
        </authorList>
    </citation>
    <scope>NUCLEOTIDE SEQUENCE [GENOMIC DNA]</scope>
    <scope>FUNCTION</scope>
    <scope>CATALYTIC ACTIVITY</scope>
    <scope>COFACTOR</scope>
    <scope>ACTIVITY REGULATION</scope>
    <scope>BIOPHYSICOCHEMICAL PROPERTIES</scope>
    <scope>SUBCELLULAR LOCATION</scope>
    <scope>DEVELOPMENTAL STAGE</scope>
    <scope>DISRUPTION PHENOTYPE</scope>
    <source>
        <strain evidence="6">427</strain>
    </source>
</reference>
<reference evidence="7" key="2">
    <citation type="journal article" date="2005" name="Biochem. Soc. Trans.">
        <title>The myo-inositol-1-phosphate synthase gene is essential in Trypanosoma brucei.</title>
        <authorList>
            <person name="Martin K.L."/>
            <person name="Smith T.K."/>
        </authorList>
    </citation>
    <scope>FUNCTION</scope>
    <scope>DISRUPTION PHENOTYPE</scope>
</reference>
<keyword id="KW-0963">Cytoplasm</keyword>
<keyword id="KW-0398">Inositol biosynthesis</keyword>
<keyword id="KW-0413">Isomerase</keyword>
<keyword id="KW-0444">Lipid biosynthesis</keyword>
<keyword id="KW-0443">Lipid metabolism</keyword>
<keyword id="KW-0520">NAD</keyword>
<keyword id="KW-0594">Phospholipid biosynthesis</keyword>
<keyword id="KW-1208">Phospholipid metabolism</keyword>
<feature type="chain" id="PRO_0000456775" description="Inositol-3-phosphate synthase">
    <location>
        <begin position="1"/>
        <end position="528"/>
    </location>
</feature>
<feature type="binding site" evidence="1">
    <location>
        <position position="66"/>
    </location>
    <ligand>
        <name>NAD(+)</name>
        <dbReference type="ChEBI" id="CHEBI:57540"/>
    </ligand>
</feature>
<feature type="binding site" evidence="1">
    <location>
        <position position="67"/>
    </location>
    <ligand>
        <name>NAD(+)</name>
        <dbReference type="ChEBI" id="CHEBI:57540"/>
    </ligand>
</feature>
<feature type="binding site" evidence="1">
    <location>
        <position position="68"/>
    </location>
    <ligand>
        <name>NAD(+)</name>
        <dbReference type="ChEBI" id="CHEBI:57540"/>
    </ligand>
</feature>
<feature type="binding site" evidence="1">
    <location>
        <position position="69"/>
    </location>
    <ligand>
        <name>NAD(+)</name>
        <dbReference type="ChEBI" id="CHEBI:57540"/>
    </ligand>
</feature>
<feature type="binding site" evidence="1">
    <location>
        <position position="140"/>
    </location>
    <ligand>
        <name>NAD(+)</name>
        <dbReference type="ChEBI" id="CHEBI:57540"/>
    </ligand>
</feature>
<feature type="binding site" evidence="1">
    <location>
        <position position="187"/>
    </location>
    <ligand>
        <name>NAD(+)</name>
        <dbReference type="ChEBI" id="CHEBI:57540"/>
    </ligand>
</feature>
<feature type="binding site" evidence="1">
    <location>
        <position position="190"/>
    </location>
    <ligand>
        <name>NAD(+)</name>
        <dbReference type="ChEBI" id="CHEBI:57540"/>
    </ligand>
</feature>
<feature type="binding site" evidence="1">
    <location>
        <position position="228"/>
    </location>
    <ligand>
        <name>NAD(+)</name>
        <dbReference type="ChEBI" id="CHEBI:57540"/>
    </ligand>
</feature>
<feature type="binding site" evidence="1">
    <location>
        <position position="229"/>
    </location>
    <ligand>
        <name>NAD(+)</name>
        <dbReference type="ChEBI" id="CHEBI:57540"/>
    </ligand>
</feature>
<feature type="binding site" evidence="1">
    <location>
        <position position="230"/>
    </location>
    <ligand>
        <name>NAD(+)</name>
        <dbReference type="ChEBI" id="CHEBI:57540"/>
    </ligand>
</feature>
<feature type="binding site" evidence="1">
    <location>
        <position position="231"/>
    </location>
    <ligand>
        <name>NAD(+)</name>
        <dbReference type="ChEBI" id="CHEBI:57540"/>
    </ligand>
</feature>
<feature type="binding site" evidence="1">
    <location>
        <position position="279"/>
    </location>
    <ligand>
        <name>NAD(+)</name>
        <dbReference type="ChEBI" id="CHEBI:57540"/>
    </ligand>
</feature>
<feature type="binding site" evidence="1">
    <location>
        <position position="304"/>
    </location>
    <ligand>
        <name>NAD(+)</name>
        <dbReference type="ChEBI" id="CHEBI:57540"/>
    </ligand>
</feature>
<feature type="binding site" evidence="1">
    <location>
        <position position="307"/>
    </location>
    <ligand>
        <name>NAD(+)</name>
        <dbReference type="ChEBI" id="CHEBI:57540"/>
    </ligand>
</feature>
<feature type="binding site" evidence="1">
    <location>
        <position position="338"/>
    </location>
    <ligand>
        <name>NAD(+)</name>
        <dbReference type="ChEBI" id="CHEBI:57540"/>
    </ligand>
</feature>
<feature type="binding site" evidence="1">
    <location>
        <position position="339"/>
    </location>
    <ligand>
        <name>NAD(+)</name>
        <dbReference type="ChEBI" id="CHEBI:57540"/>
    </ligand>
</feature>
<feature type="binding site" evidence="1">
    <location>
        <position position="340"/>
    </location>
    <ligand>
        <name>NAD(+)</name>
        <dbReference type="ChEBI" id="CHEBI:57540"/>
    </ligand>
</feature>
<feature type="binding site" evidence="1">
    <location>
        <position position="353"/>
    </location>
    <ligand>
        <name>NAD(+)</name>
        <dbReference type="ChEBI" id="CHEBI:57540"/>
    </ligand>
</feature>
<feature type="binding site" evidence="1">
    <location>
        <position position="392"/>
    </location>
    <ligand>
        <name>NAD(+)</name>
        <dbReference type="ChEBI" id="CHEBI:57540"/>
    </ligand>
</feature>
<feature type="binding site" evidence="1">
    <location>
        <position position="393"/>
    </location>
    <ligand>
        <name>NAD(+)</name>
        <dbReference type="ChEBI" id="CHEBI:57540"/>
    </ligand>
</feature>
<feature type="binding site" evidence="1">
    <location>
        <position position="421"/>
    </location>
    <ligand>
        <name>NAD(+)</name>
        <dbReference type="ChEBI" id="CHEBI:57540"/>
    </ligand>
</feature>
<feature type="binding site" evidence="1">
    <location>
        <position position="422"/>
    </location>
    <ligand>
        <name>NAD(+)</name>
        <dbReference type="ChEBI" id="CHEBI:57540"/>
    </ligand>
</feature>
<accession>Q5QQ46</accession>
<gene>
    <name evidence="6" type="primary">INO1</name>
</gene>
<dbReference type="EC" id="5.5.1.4" evidence="4"/>
<dbReference type="EMBL" id="AJ866770">
    <property type="protein sequence ID" value="CAI29175.1"/>
    <property type="molecule type" value="Genomic_DNA"/>
</dbReference>
<dbReference type="UniPathway" id="UPA00823">
    <property type="reaction ID" value="UER00787"/>
</dbReference>
<dbReference type="GO" id="GO:0005829">
    <property type="term" value="C:cytosol"/>
    <property type="evidence" value="ECO:0007669"/>
    <property type="project" value="UniProtKB-SubCell"/>
</dbReference>
<dbReference type="GO" id="GO:0016020">
    <property type="term" value="C:membrane"/>
    <property type="evidence" value="ECO:0007669"/>
    <property type="project" value="GOC"/>
</dbReference>
<dbReference type="GO" id="GO:0004512">
    <property type="term" value="F:inositol-3-phosphate synthase activity"/>
    <property type="evidence" value="ECO:0000314"/>
    <property type="project" value="UniProtKB"/>
</dbReference>
<dbReference type="GO" id="GO:0006506">
    <property type="term" value="P:GPI anchor biosynthetic process"/>
    <property type="evidence" value="ECO:0000315"/>
    <property type="project" value="UniProtKB"/>
</dbReference>
<dbReference type="GO" id="GO:0006021">
    <property type="term" value="P:inositol biosynthetic process"/>
    <property type="evidence" value="ECO:0000314"/>
    <property type="project" value="UniProtKB"/>
</dbReference>
<dbReference type="FunFam" id="3.40.50.720:FF:000334">
    <property type="entry name" value="Inositol-3-phosphate synthase"/>
    <property type="match status" value="1"/>
</dbReference>
<dbReference type="FunFam" id="3.40.50.720:FF:000907">
    <property type="entry name" value="Probable myo-inositol 1-phosphate synthase (MIPS)"/>
    <property type="match status" value="1"/>
</dbReference>
<dbReference type="FunFam" id="3.30.360.10:FF:000055">
    <property type="entry name" value="Putative myo-inositol-1-phosphate synthase"/>
    <property type="match status" value="1"/>
</dbReference>
<dbReference type="Gene3D" id="3.30.360.10">
    <property type="entry name" value="Dihydrodipicolinate Reductase, domain 2"/>
    <property type="match status" value="1"/>
</dbReference>
<dbReference type="Gene3D" id="3.40.50.720">
    <property type="entry name" value="NAD(P)-binding Rossmann-like Domain"/>
    <property type="match status" value="2"/>
</dbReference>
<dbReference type="InterPro" id="IPR002587">
    <property type="entry name" value="Myo-inos-1-P_Synthase"/>
</dbReference>
<dbReference type="InterPro" id="IPR013021">
    <property type="entry name" value="Myo-inos-1-P_Synthase_GAPDH"/>
</dbReference>
<dbReference type="InterPro" id="IPR036291">
    <property type="entry name" value="NAD(P)-bd_dom_sf"/>
</dbReference>
<dbReference type="PANTHER" id="PTHR11510">
    <property type="entry name" value="MYO-INOSITOL-1 PHOSPHATE SYNTHASE"/>
    <property type="match status" value="1"/>
</dbReference>
<dbReference type="Pfam" id="PF01658">
    <property type="entry name" value="Inos-1-P_synth"/>
    <property type="match status" value="1"/>
</dbReference>
<dbReference type="Pfam" id="PF07994">
    <property type="entry name" value="NAD_binding_5"/>
    <property type="match status" value="1"/>
</dbReference>
<dbReference type="PIRSF" id="PIRSF015578">
    <property type="entry name" value="Myoinos-ppht_syn"/>
    <property type="match status" value="1"/>
</dbReference>
<dbReference type="SUPFAM" id="SSF55347">
    <property type="entry name" value="Glyceraldehyde-3-phosphate dehydrogenase-like, C-terminal domain"/>
    <property type="match status" value="1"/>
</dbReference>
<dbReference type="SUPFAM" id="SSF51735">
    <property type="entry name" value="NAD(P)-binding Rossmann-fold domains"/>
    <property type="match status" value="1"/>
</dbReference>